<dbReference type="EC" id="3.4.11.4" evidence="1"/>
<dbReference type="EMBL" id="CP000233">
    <property type="protein sequence ID" value="ABD99658.1"/>
    <property type="molecule type" value="Genomic_DNA"/>
</dbReference>
<dbReference type="RefSeq" id="WP_011475995.1">
    <property type="nucleotide sequence ID" value="NC_007929.1"/>
</dbReference>
<dbReference type="RefSeq" id="YP_535741.1">
    <property type="nucleotide sequence ID" value="NC_007929.1"/>
</dbReference>
<dbReference type="SMR" id="Q1WTV4"/>
<dbReference type="STRING" id="362948.LSL_0848"/>
<dbReference type="MEROPS" id="M20.003"/>
<dbReference type="KEGG" id="lsl:LSL_0848"/>
<dbReference type="PATRIC" id="fig|362948.14.peg.923"/>
<dbReference type="HOGENOM" id="CLU_053676_0_0_9"/>
<dbReference type="OrthoDB" id="9804934at2"/>
<dbReference type="Proteomes" id="UP000006559">
    <property type="component" value="Chromosome"/>
</dbReference>
<dbReference type="GO" id="GO:0005829">
    <property type="term" value="C:cytosol"/>
    <property type="evidence" value="ECO:0007669"/>
    <property type="project" value="TreeGrafter"/>
</dbReference>
<dbReference type="GO" id="GO:0008237">
    <property type="term" value="F:metallopeptidase activity"/>
    <property type="evidence" value="ECO:0007669"/>
    <property type="project" value="UniProtKB-KW"/>
</dbReference>
<dbReference type="GO" id="GO:0045148">
    <property type="term" value="F:tripeptide aminopeptidase activity"/>
    <property type="evidence" value="ECO:0007669"/>
    <property type="project" value="UniProtKB-UniRule"/>
</dbReference>
<dbReference type="GO" id="GO:0008270">
    <property type="term" value="F:zinc ion binding"/>
    <property type="evidence" value="ECO:0007669"/>
    <property type="project" value="UniProtKB-UniRule"/>
</dbReference>
<dbReference type="GO" id="GO:0043171">
    <property type="term" value="P:peptide catabolic process"/>
    <property type="evidence" value="ECO:0007669"/>
    <property type="project" value="UniProtKB-UniRule"/>
</dbReference>
<dbReference type="GO" id="GO:0006508">
    <property type="term" value="P:proteolysis"/>
    <property type="evidence" value="ECO:0007669"/>
    <property type="project" value="UniProtKB-UniRule"/>
</dbReference>
<dbReference type="CDD" id="cd03892">
    <property type="entry name" value="M20_peptT"/>
    <property type="match status" value="1"/>
</dbReference>
<dbReference type="FunFam" id="3.30.70.360:FF:000002">
    <property type="entry name" value="Peptidase T"/>
    <property type="match status" value="1"/>
</dbReference>
<dbReference type="Gene3D" id="3.30.70.360">
    <property type="match status" value="1"/>
</dbReference>
<dbReference type="Gene3D" id="3.40.630.10">
    <property type="entry name" value="Zn peptidases"/>
    <property type="match status" value="1"/>
</dbReference>
<dbReference type="HAMAP" id="MF_00550">
    <property type="entry name" value="Aminopeptidase_M20"/>
    <property type="match status" value="1"/>
</dbReference>
<dbReference type="InterPro" id="IPR001261">
    <property type="entry name" value="ArgE/DapE_CS"/>
</dbReference>
<dbReference type="InterPro" id="IPR036264">
    <property type="entry name" value="Bact_exopeptidase_dim_dom"/>
</dbReference>
<dbReference type="InterPro" id="IPR002933">
    <property type="entry name" value="Peptidase_M20"/>
</dbReference>
<dbReference type="InterPro" id="IPR011650">
    <property type="entry name" value="Peptidase_M20_dimer"/>
</dbReference>
<dbReference type="InterPro" id="IPR010161">
    <property type="entry name" value="Peptidase_M20B"/>
</dbReference>
<dbReference type="NCBIfam" id="TIGR01882">
    <property type="entry name" value="peptidase-T"/>
    <property type="match status" value="1"/>
</dbReference>
<dbReference type="NCBIfam" id="NF003976">
    <property type="entry name" value="PRK05469.1"/>
    <property type="match status" value="1"/>
</dbReference>
<dbReference type="NCBIfam" id="NF009920">
    <property type="entry name" value="PRK13381.1"/>
    <property type="match status" value="1"/>
</dbReference>
<dbReference type="PANTHER" id="PTHR42994">
    <property type="entry name" value="PEPTIDASE T"/>
    <property type="match status" value="1"/>
</dbReference>
<dbReference type="PANTHER" id="PTHR42994:SF1">
    <property type="entry name" value="PEPTIDASE T"/>
    <property type="match status" value="1"/>
</dbReference>
<dbReference type="Pfam" id="PF07687">
    <property type="entry name" value="M20_dimer"/>
    <property type="match status" value="1"/>
</dbReference>
<dbReference type="Pfam" id="PF01546">
    <property type="entry name" value="Peptidase_M20"/>
    <property type="match status" value="1"/>
</dbReference>
<dbReference type="PIRSF" id="PIRSF037215">
    <property type="entry name" value="Peptidase_M20B"/>
    <property type="match status" value="1"/>
</dbReference>
<dbReference type="SUPFAM" id="SSF55031">
    <property type="entry name" value="Bacterial exopeptidase dimerisation domain"/>
    <property type="match status" value="1"/>
</dbReference>
<dbReference type="SUPFAM" id="SSF53187">
    <property type="entry name" value="Zn-dependent exopeptidases"/>
    <property type="match status" value="1"/>
</dbReference>
<dbReference type="PROSITE" id="PS00758">
    <property type="entry name" value="ARGE_DAPE_CPG2_1"/>
    <property type="match status" value="1"/>
</dbReference>
<dbReference type="PROSITE" id="PS00759">
    <property type="entry name" value="ARGE_DAPE_CPG2_2"/>
    <property type="match status" value="1"/>
</dbReference>
<feature type="chain" id="PRO_0000274017" description="Peptidase T">
    <location>
        <begin position="1"/>
        <end position="413"/>
    </location>
</feature>
<feature type="active site" evidence="1">
    <location>
        <position position="86"/>
    </location>
</feature>
<feature type="active site" description="Proton acceptor" evidence="1">
    <location>
        <position position="181"/>
    </location>
</feature>
<feature type="binding site" evidence="1">
    <location>
        <position position="84"/>
    </location>
    <ligand>
        <name>Zn(2+)</name>
        <dbReference type="ChEBI" id="CHEBI:29105"/>
        <label>1</label>
    </ligand>
</feature>
<feature type="binding site" evidence="1">
    <location>
        <position position="147"/>
    </location>
    <ligand>
        <name>Zn(2+)</name>
        <dbReference type="ChEBI" id="CHEBI:29105"/>
        <label>1</label>
    </ligand>
</feature>
<feature type="binding site" evidence="1">
    <location>
        <position position="147"/>
    </location>
    <ligand>
        <name>Zn(2+)</name>
        <dbReference type="ChEBI" id="CHEBI:29105"/>
        <label>2</label>
    </ligand>
</feature>
<feature type="binding site" evidence="1">
    <location>
        <position position="182"/>
    </location>
    <ligand>
        <name>Zn(2+)</name>
        <dbReference type="ChEBI" id="CHEBI:29105"/>
        <label>2</label>
    </ligand>
</feature>
<feature type="binding site" evidence="1">
    <location>
        <position position="204"/>
    </location>
    <ligand>
        <name>Zn(2+)</name>
        <dbReference type="ChEBI" id="CHEBI:29105"/>
        <label>1</label>
    </ligand>
</feature>
<feature type="binding site" evidence="1">
    <location>
        <position position="386"/>
    </location>
    <ligand>
        <name>Zn(2+)</name>
        <dbReference type="ChEBI" id="CHEBI:29105"/>
        <label>2</label>
    </ligand>
</feature>
<proteinExistence type="inferred from homology"/>
<sequence length="413" mass="45915">MAKYENLVTRFLKYVKTETRSNEDSTTIPSTQTQVEFIKGLANELKGLGLQNVHISDESGYVFATLPSNLEDDANTKVVGFISHVDTADFNAHNVQPQIVENYDGESDIKLDEAGNFVLTTAEFPNLRNYKGHDLITTDGSTLLGADDKSGVAEIMSAMEYLQAHPEIKHGEIKVGFGPDEEIGTGADNFNVEDFGADIAYTVDGGPLGELEYETFNAAQAKLTFKGKDVHTGTAKNVMVNAIQLAINYQNSLPADEVPEKTEGREGFFHLFKFDGSVEEAHTTYIIRDHDRKHFEERKQLMLDIAERMNTELGEERVVIDLQDQYYNMREVLEKDMTAVDIAKEAMEDLGITPEIYPVRGGTDGSKISFMGLPTPNLFAGGENMHGRYEYVSTQVMEKATDVILEIVKLLAK</sequence>
<name>PEPT_LIGS1</name>
<evidence type="ECO:0000255" key="1">
    <source>
        <dbReference type="HAMAP-Rule" id="MF_00550"/>
    </source>
</evidence>
<reference key="1">
    <citation type="journal article" date="2006" name="Proc. Natl. Acad. Sci. U.S.A.">
        <title>Multireplicon genome architecture of Lactobacillus salivarius.</title>
        <authorList>
            <person name="Claesson M.J."/>
            <person name="Li Y."/>
            <person name="Leahy S."/>
            <person name="Canchaya C."/>
            <person name="van Pijkeren J.P."/>
            <person name="Cerdeno-Tarraga A.M."/>
            <person name="Parkhill J."/>
            <person name="Flynn S."/>
            <person name="O'Sullivan G.C."/>
            <person name="Collins J.K."/>
            <person name="Higgins D."/>
            <person name="Shanahan F."/>
            <person name="Fitzgerald G.F."/>
            <person name="van Sinderen D."/>
            <person name="O'Toole P.W."/>
        </authorList>
    </citation>
    <scope>NUCLEOTIDE SEQUENCE [LARGE SCALE GENOMIC DNA]</scope>
    <source>
        <strain>UCC118</strain>
    </source>
</reference>
<gene>
    <name evidence="1" type="primary">pepT</name>
    <name type="ordered locus">LSL_0848</name>
</gene>
<comment type="function">
    <text evidence="1">Cleaves the N-terminal amino acid of tripeptides.</text>
</comment>
<comment type="catalytic activity">
    <reaction evidence="1">
        <text>Release of the N-terminal residue from a tripeptide.</text>
        <dbReference type="EC" id="3.4.11.4"/>
    </reaction>
</comment>
<comment type="cofactor">
    <cofactor evidence="1">
        <name>Zn(2+)</name>
        <dbReference type="ChEBI" id="CHEBI:29105"/>
    </cofactor>
    <text evidence="1">Binds 2 Zn(2+) ions per subunit.</text>
</comment>
<comment type="subcellular location">
    <subcellularLocation>
        <location evidence="1">Cytoplasm</location>
    </subcellularLocation>
</comment>
<comment type="similarity">
    <text evidence="1">Belongs to the peptidase M20B family.</text>
</comment>
<organism>
    <name type="scientific">Ligilactobacillus salivarius (strain UCC118)</name>
    <name type="common">Lactobacillus salivarius</name>
    <dbReference type="NCBI Taxonomy" id="362948"/>
    <lineage>
        <taxon>Bacteria</taxon>
        <taxon>Bacillati</taxon>
        <taxon>Bacillota</taxon>
        <taxon>Bacilli</taxon>
        <taxon>Lactobacillales</taxon>
        <taxon>Lactobacillaceae</taxon>
        <taxon>Ligilactobacillus</taxon>
    </lineage>
</organism>
<keyword id="KW-0031">Aminopeptidase</keyword>
<keyword id="KW-0963">Cytoplasm</keyword>
<keyword id="KW-0378">Hydrolase</keyword>
<keyword id="KW-0479">Metal-binding</keyword>
<keyword id="KW-0482">Metalloprotease</keyword>
<keyword id="KW-0645">Protease</keyword>
<keyword id="KW-1185">Reference proteome</keyword>
<keyword id="KW-0862">Zinc</keyword>
<accession>Q1WTV4</accession>
<protein>
    <recommendedName>
        <fullName evidence="1">Peptidase T</fullName>
        <ecNumber evidence="1">3.4.11.4</ecNumber>
    </recommendedName>
    <alternativeName>
        <fullName evidence="1">Aminotripeptidase</fullName>
        <shortName evidence="1">Tripeptidase</shortName>
    </alternativeName>
    <alternativeName>
        <fullName evidence="1">Tripeptide aminopeptidase</fullName>
    </alternativeName>
</protein>